<name>ROCK2_MOUSE</name>
<protein>
    <recommendedName>
        <fullName>Rho-associated protein kinase 2</fullName>
        <ecNumber>2.7.11.1</ecNumber>
    </recommendedName>
    <alternativeName>
        <fullName>Rho-associated, coiled-coil-containing protein kinase 2</fullName>
    </alternativeName>
    <alternativeName>
        <fullName>Rho-associated, coiled-coil-containing protein kinase II</fullName>
        <shortName>ROCK-II</shortName>
    </alternativeName>
    <alternativeName>
        <fullName>p164 ROCK-2</fullName>
    </alternativeName>
</protein>
<gene>
    <name type="primary">Rock2</name>
</gene>
<feature type="chain" id="PRO_0000086626" description="Rho-associated protein kinase 2">
    <location>
        <begin position="1"/>
        <end position="1388"/>
    </location>
</feature>
<feature type="domain" description="Protein kinase" evidence="7">
    <location>
        <begin position="92"/>
        <end position="354"/>
    </location>
</feature>
<feature type="domain" description="AGC-kinase C-terminal" evidence="9">
    <location>
        <begin position="357"/>
        <end position="425"/>
    </location>
</feature>
<feature type="domain" description="REM-1" evidence="11">
    <location>
        <begin position="497"/>
        <end position="573"/>
    </location>
</feature>
<feature type="domain" description="RhoBD" evidence="10">
    <location>
        <begin position="979"/>
        <end position="1047"/>
    </location>
</feature>
<feature type="domain" description="PH" evidence="6">
    <location>
        <begin position="1150"/>
        <end position="1349"/>
    </location>
</feature>
<feature type="zinc finger region" description="Phorbol-ester/DAG-type" evidence="8">
    <location>
        <begin position="1260"/>
        <end position="1315"/>
    </location>
</feature>
<feature type="region of interest" description="Disordered" evidence="13">
    <location>
        <begin position="1"/>
        <end position="26"/>
    </location>
</feature>
<feature type="region of interest" description="Interaction with PPP1R12A" evidence="1">
    <location>
        <begin position="363"/>
        <end position="784"/>
    </location>
</feature>
<feature type="region of interest" description="Interaction with NPM1" evidence="1">
    <location>
        <begin position="373"/>
        <end position="420"/>
    </location>
</feature>
<feature type="region of interest" description="Disordered" evidence="13">
    <location>
        <begin position="512"/>
        <end position="532"/>
    </location>
</feature>
<feature type="region of interest" description="RHOA binding" evidence="1">
    <location>
        <begin position="979"/>
        <end position="1047"/>
    </location>
</feature>
<feature type="region of interest" description="Disordered" evidence="13">
    <location>
        <begin position="1345"/>
        <end position="1388"/>
    </location>
</feature>
<feature type="coiled-coil region" evidence="5">
    <location>
        <begin position="439"/>
        <end position="1131"/>
    </location>
</feature>
<feature type="compositionally biased region" description="Basic and acidic residues" evidence="13">
    <location>
        <begin position="512"/>
        <end position="530"/>
    </location>
</feature>
<feature type="compositionally biased region" description="Polar residues" evidence="13">
    <location>
        <begin position="1362"/>
        <end position="1376"/>
    </location>
</feature>
<feature type="active site" description="Proton acceptor" evidence="7 12">
    <location>
        <position position="214"/>
    </location>
</feature>
<feature type="binding site" evidence="7">
    <location>
        <begin position="98"/>
        <end position="106"/>
    </location>
    <ligand>
        <name>ATP</name>
        <dbReference type="ChEBI" id="CHEBI:30616"/>
    </ligand>
</feature>
<feature type="binding site" evidence="7">
    <location>
        <position position="121"/>
    </location>
    <ligand>
        <name>ATP</name>
        <dbReference type="ChEBI" id="CHEBI:30616"/>
    </ligand>
</feature>
<feature type="site" description="Cleavage; by granzyme B">
    <location>
        <begin position="1131"/>
        <end position="1132"/>
    </location>
</feature>
<feature type="modified residue" description="Phosphothreonine; by ROCK2" evidence="4">
    <location>
        <position position="414"/>
    </location>
</feature>
<feature type="modified residue" description="Phosphotyrosine; by SRC" evidence="2">
    <location>
        <position position="722"/>
    </location>
</feature>
<feature type="modified residue" description="Phosphoserine" evidence="25">
    <location>
        <position position="1137"/>
    </location>
</feature>
<feature type="modified residue" description="Phosphothreonine" evidence="2">
    <location>
        <position position="1212"/>
    </location>
</feature>
<feature type="modified residue" description="Phosphoserine" evidence="2">
    <location>
        <position position="1362"/>
    </location>
</feature>
<feature type="modified residue" description="Phosphoserine" evidence="25">
    <location>
        <position position="1374"/>
    </location>
</feature>
<feature type="splice variant" id="VSP_041818" description="In isoform 2." evidence="23">
    <original>P</original>
    <variation>PVHITQSHTMESMSFTYQRSSTSLSIATKPSSSHTLLDFDSEEDSLPYLPSSSEPIST</variation>
    <location>
        <position position="1149"/>
    </location>
</feature>
<feature type="splice variant" id="VSP_041819" description="In isoform 2." evidence="23">
    <location>
        <position position="1388"/>
    </location>
</feature>
<keyword id="KW-0025">Alternative splicing</keyword>
<keyword id="KW-0067">ATP-binding</keyword>
<keyword id="KW-0090">Biological rhythms</keyword>
<keyword id="KW-1003">Cell membrane</keyword>
<keyword id="KW-0175">Coiled coil</keyword>
<keyword id="KW-0963">Cytoplasm</keyword>
<keyword id="KW-0206">Cytoskeleton</keyword>
<keyword id="KW-0418">Kinase</keyword>
<keyword id="KW-0460">Magnesium</keyword>
<keyword id="KW-0472">Membrane</keyword>
<keyword id="KW-0479">Metal-binding</keyword>
<keyword id="KW-0547">Nucleotide-binding</keyword>
<keyword id="KW-0539">Nucleus</keyword>
<keyword id="KW-0597">Phosphoprotein</keyword>
<keyword id="KW-1185">Reference proteome</keyword>
<keyword id="KW-0723">Serine/threonine-protein kinase</keyword>
<keyword id="KW-0808">Transferase</keyword>
<keyword id="KW-0862">Zinc</keyword>
<keyword id="KW-0863">Zinc-finger</keyword>
<sequence>MSRPPPTGKMPGAPEAAPGDGAGAGRQRKLEALIRDPRSPINVESLLDGLNSLVLDLDFPALRKNKNIDNFLNRYEKIVKKIRGLQMKAEDYDVVKVIGRGAFGEVQLVRHKASQKVYAMKLLSKFEMIKRSDSAFFWEERDIMAFANSPWVVQLFCAFQDDRYLYMVMEYMPGGDLVNLMSNYDVPEKWAKFYTAEVVLALDAIHSMGLIHRDVKPDNMLLDKHGHLKLADFGTCMKMDETGMVHCDTAVGTPDYISPEVLKSQGGDGYYGRECDWWSVGVFLFEMLVGDTPFYADSLVGTYSKIMDHKNSLCFPEDTEISKHAKNLICAFLTDREVRLGRNGVEEIKQHPFFKNDQWNWDNIRETAAPVVPELSSDIDSSNFDDIEDDKGDVETFPIPKAFVGNQLPFIGFTYFRENLLLSDSPPCRENDAIQTRKSEESQEIQKKLYALEEHLSSEVQAKEELEQKCKSINTRLEKTAKELEEEITLRKSVESTLRQLEREKALLQHKNAEYQRKADHEADKKRNLENDVNSLKDQLEDLKKRNQSSQISTEKVNQLQKQLDEANALLRTESDTAARLRKTQAESSKQIQQLESNNRDLQDKNCLLETAKLKLEKEFINLQSALESERRDRTHGSEIINDLQGRISGLEEDLKTGKALLAKVELEKRQLQEKLTDLEKEKSNMEIDMTYQLKVIQQSLEQEEAEHKTTKARLADKNKIYESIEEAKSEAMKEMEKKLLEERSLKQKVENLLLEAEKRCSILDCDLKQSQQKLNELLKQKDVLNEDVRNLTLKIEQETQKRCLMQNDLKMQTQQVNTLKMSEKQIKQENNHLMEMKMNLEKQNTELRKERQDADGQMKELQDQLEAEQYFSTLYKTQVRELKEENEEKTKLCKELQQKKQDLQDERDSLAAQLEITLTKADSEQLARSIAEEQYSDLEKEKIMKELEIKEMMARHKQELTEKDTTIASLEETNRTLTSDVANLANEKEELNNKLKDSQEQLSKLKDEEMSAAAIKAQFEKQLLNERTLKTQAVNKLAEIMNRKEPVKRGSDTDVRRKEKENRKLHMELKSEREKLTQQMIKYQKELNEMQAQIAEESQIRIELQMTLDSKDSDIEQLRSQLQALHIGMDSSSIGSGPGDAEPDDGFPESRLEGWLSLPVRNNTKKFGWVKKYVIVSSKKILFYDSEQDKEQSNPYMVLDIDKLFHVRPVTQTDVYRADAKEIPRIFQILYANEGESKKEPEFPVEPVGEKSNYICHKGHEFIPTLYHFPTNCEACMKPLWHMFKPPPALECRRCHIKCHKDHMDKKEEIIAPCKVYYDISSAKNLLLLANSTEEQQKWVSRLVKKIPKKPPAPDPFARSSPRTSMKIQQNQSIRRPSRQLAPNKPS</sequence>
<accession>P70336</accession>
<accession>A5XDA7</accession>
<accession>Q8BR64</accession>
<accession>Q8CBR0</accession>
<organism>
    <name type="scientific">Mus musculus</name>
    <name type="common">Mouse</name>
    <dbReference type="NCBI Taxonomy" id="10090"/>
    <lineage>
        <taxon>Eukaryota</taxon>
        <taxon>Metazoa</taxon>
        <taxon>Chordata</taxon>
        <taxon>Craniata</taxon>
        <taxon>Vertebrata</taxon>
        <taxon>Euteleostomi</taxon>
        <taxon>Mammalia</taxon>
        <taxon>Eutheria</taxon>
        <taxon>Euarchontoglires</taxon>
        <taxon>Glires</taxon>
        <taxon>Rodentia</taxon>
        <taxon>Myomorpha</taxon>
        <taxon>Muroidea</taxon>
        <taxon>Muridae</taxon>
        <taxon>Murinae</taxon>
        <taxon>Mus</taxon>
        <taxon>Mus</taxon>
    </lineage>
</organism>
<dbReference type="EC" id="2.7.11.1"/>
<dbReference type="EMBL" id="U58513">
    <property type="protein sequence ID" value="AAC53133.1"/>
    <property type="molecule type" value="mRNA"/>
</dbReference>
<dbReference type="EMBL" id="DQ864977">
    <property type="protein sequence ID" value="ABI75318.1"/>
    <property type="molecule type" value="mRNA"/>
</dbReference>
<dbReference type="EMBL" id="AK045517">
    <property type="protein sequence ID" value="BAC32403.1"/>
    <property type="molecule type" value="mRNA"/>
</dbReference>
<dbReference type="EMBL" id="AK035509">
    <property type="protein sequence ID" value="BAC29084.1"/>
    <property type="molecule type" value="mRNA"/>
</dbReference>
<dbReference type="CCDS" id="CCDS36410.1">
    <molecule id="P70336-1"/>
</dbReference>
<dbReference type="PIR" id="S74245">
    <property type="entry name" value="S74245"/>
</dbReference>
<dbReference type="RefSeq" id="NP_033098.2">
    <property type="nucleotide sequence ID" value="NM_009072.2"/>
</dbReference>
<dbReference type="SMR" id="P70336"/>
<dbReference type="BioGRID" id="202951">
    <property type="interactions" value="50"/>
</dbReference>
<dbReference type="CORUM" id="P70336"/>
<dbReference type="FunCoup" id="P70336">
    <property type="interactions" value="1992"/>
</dbReference>
<dbReference type="IntAct" id="P70336">
    <property type="interactions" value="7"/>
</dbReference>
<dbReference type="MINT" id="P70336"/>
<dbReference type="STRING" id="10090.ENSMUSP00000020904"/>
<dbReference type="GlyConnect" id="2685">
    <property type="glycosylation" value="7 N-Linked glycans (1 site)"/>
</dbReference>
<dbReference type="GlyCosmos" id="P70336">
    <property type="glycosylation" value="1 site, 7 glycans"/>
</dbReference>
<dbReference type="GlyGen" id="P70336">
    <property type="glycosylation" value="1 site, 5 N-linked glycans (1 site)"/>
</dbReference>
<dbReference type="iPTMnet" id="P70336"/>
<dbReference type="PhosphoSitePlus" id="P70336"/>
<dbReference type="SwissPalm" id="P70336"/>
<dbReference type="jPOST" id="P70336"/>
<dbReference type="PaxDb" id="10090-ENSMUSP00000020904"/>
<dbReference type="PeptideAtlas" id="P70336"/>
<dbReference type="ProteomicsDB" id="300567">
    <molecule id="P70336-1"/>
</dbReference>
<dbReference type="ProteomicsDB" id="301592">
    <molecule id="P70336-2"/>
</dbReference>
<dbReference type="Pumba" id="P70336"/>
<dbReference type="DNASU" id="19878"/>
<dbReference type="GeneID" id="19878"/>
<dbReference type="KEGG" id="mmu:19878"/>
<dbReference type="UCSC" id="uc007ncg.1">
    <molecule id="P70336-2"/>
    <property type="organism name" value="mouse"/>
</dbReference>
<dbReference type="AGR" id="MGI:107926"/>
<dbReference type="CTD" id="9475"/>
<dbReference type="MGI" id="MGI:107926">
    <property type="gene designation" value="Rock2"/>
</dbReference>
<dbReference type="eggNOG" id="KOG0612">
    <property type="taxonomic scope" value="Eukaryota"/>
</dbReference>
<dbReference type="InParanoid" id="P70336"/>
<dbReference type="PhylomeDB" id="P70336"/>
<dbReference type="Reactome" id="R-MMU-3928662">
    <property type="pathway name" value="EPHB-mediated forward signaling"/>
</dbReference>
<dbReference type="Reactome" id="R-MMU-416482">
    <property type="pathway name" value="G alpha (12/13) signalling events"/>
</dbReference>
<dbReference type="Reactome" id="R-MMU-416572">
    <property type="pathway name" value="Sema4D induced cell migration and growth-cone collapse"/>
</dbReference>
<dbReference type="Reactome" id="R-MMU-4420097">
    <property type="pathway name" value="VEGFA-VEGFR2 Pathway"/>
</dbReference>
<dbReference type="Reactome" id="R-MMU-5627117">
    <property type="pathway name" value="RHO GTPases Activate ROCKs"/>
</dbReference>
<dbReference type="Reactome" id="R-MMU-8980692">
    <property type="pathway name" value="RHOA GTPase cycle"/>
</dbReference>
<dbReference type="Reactome" id="R-MMU-9013026">
    <property type="pathway name" value="RHOB GTPase cycle"/>
</dbReference>
<dbReference type="Reactome" id="R-MMU-9013106">
    <property type="pathway name" value="RHOC GTPase cycle"/>
</dbReference>
<dbReference type="Reactome" id="R-MMU-9013407">
    <property type="pathway name" value="RHOH GTPase cycle"/>
</dbReference>
<dbReference type="Reactome" id="R-MMU-9013422">
    <property type="pathway name" value="RHOBTB1 GTPase cycle"/>
</dbReference>
<dbReference type="BioGRID-ORCS" id="19878">
    <property type="hits" value="8 hits in 81 CRISPR screens"/>
</dbReference>
<dbReference type="CD-CODE" id="CE726F99">
    <property type="entry name" value="Postsynaptic density"/>
</dbReference>
<dbReference type="ChiTaRS" id="Rock2">
    <property type="organism name" value="mouse"/>
</dbReference>
<dbReference type="PRO" id="PR:P70336"/>
<dbReference type="Proteomes" id="UP000000589">
    <property type="component" value="Unplaced"/>
</dbReference>
<dbReference type="RNAct" id="P70336">
    <property type="molecule type" value="protein"/>
</dbReference>
<dbReference type="GO" id="GO:0005813">
    <property type="term" value="C:centrosome"/>
    <property type="evidence" value="ECO:0000314"/>
    <property type="project" value="MGI"/>
</dbReference>
<dbReference type="GO" id="GO:0005737">
    <property type="term" value="C:cytoplasm"/>
    <property type="evidence" value="ECO:0007669"/>
    <property type="project" value="UniProtKB-SubCell"/>
</dbReference>
<dbReference type="GO" id="GO:0098978">
    <property type="term" value="C:glutamatergic synapse"/>
    <property type="evidence" value="ECO:0000314"/>
    <property type="project" value="SynGO"/>
</dbReference>
<dbReference type="GO" id="GO:0031594">
    <property type="term" value="C:neuromuscular junction"/>
    <property type="evidence" value="ECO:0000314"/>
    <property type="project" value="SynGO"/>
</dbReference>
<dbReference type="GO" id="GO:0005634">
    <property type="term" value="C:nucleus"/>
    <property type="evidence" value="ECO:0007669"/>
    <property type="project" value="UniProtKB-SubCell"/>
</dbReference>
<dbReference type="GO" id="GO:0005886">
    <property type="term" value="C:plasma membrane"/>
    <property type="evidence" value="ECO:0007669"/>
    <property type="project" value="UniProtKB-SubCell"/>
</dbReference>
<dbReference type="GO" id="GO:0014069">
    <property type="term" value="C:postsynaptic density"/>
    <property type="evidence" value="ECO:0000314"/>
    <property type="project" value="SynGO"/>
</dbReference>
<dbReference type="GO" id="GO:0048786">
    <property type="term" value="C:presynaptic active zone"/>
    <property type="evidence" value="ECO:0000314"/>
    <property type="project" value="SynGO"/>
</dbReference>
<dbReference type="GO" id="GO:0098685">
    <property type="term" value="C:Schaffer collateral - CA1 synapse"/>
    <property type="evidence" value="ECO:0000314"/>
    <property type="project" value="SynGO"/>
</dbReference>
<dbReference type="GO" id="GO:0031616">
    <property type="term" value="C:spindle pole centrosome"/>
    <property type="evidence" value="ECO:0000314"/>
    <property type="project" value="MGI"/>
</dbReference>
<dbReference type="GO" id="GO:0005524">
    <property type="term" value="F:ATP binding"/>
    <property type="evidence" value="ECO:0007669"/>
    <property type="project" value="UniProtKB-KW"/>
</dbReference>
<dbReference type="GO" id="GO:0061133">
    <property type="term" value="F:endopeptidase activator activity"/>
    <property type="evidence" value="ECO:0000250"/>
    <property type="project" value="ARUK-UCL"/>
</dbReference>
<dbReference type="GO" id="GO:0004672">
    <property type="term" value="F:protein kinase activity"/>
    <property type="evidence" value="ECO:0000314"/>
    <property type="project" value="MGI"/>
</dbReference>
<dbReference type="GO" id="GO:0106310">
    <property type="term" value="F:protein serine kinase activity"/>
    <property type="evidence" value="ECO:0007669"/>
    <property type="project" value="RHEA"/>
</dbReference>
<dbReference type="GO" id="GO:0004674">
    <property type="term" value="F:protein serine/threonine kinase activity"/>
    <property type="evidence" value="ECO:0000315"/>
    <property type="project" value="ARUK-UCL"/>
</dbReference>
<dbReference type="GO" id="GO:0031267">
    <property type="term" value="F:small GTPase binding"/>
    <property type="evidence" value="ECO:0007669"/>
    <property type="project" value="InterPro"/>
</dbReference>
<dbReference type="GO" id="GO:0008270">
    <property type="term" value="F:zinc ion binding"/>
    <property type="evidence" value="ECO:0007669"/>
    <property type="project" value="UniProtKB-KW"/>
</dbReference>
<dbReference type="GO" id="GO:0030036">
    <property type="term" value="P:actin cytoskeleton organization"/>
    <property type="evidence" value="ECO:0000316"/>
    <property type="project" value="BHF-UCL"/>
</dbReference>
<dbReference type="GO" id="GO:0097746">
    <property type="term" value="P:blood vessel diameter maintenance"/>
    <property type="evidence" value="ECO:0000315"/>
    <property type="project" value="ARUK-UCL"/>
</dbReference>
<dbReference type="GO" id="GO:1905145">
    <property type="term" value="P:cellular response to acetylcholine"/>
    <property type="evidence" value="ECO:0000315"/>
    <property type="project" value="ARUK-UCL"/>
</dbReference>
<dbReference type="GO" id="GO:0051298">
    <property type="term" value="P:centrosome duplication"/>
    <property type="evidence" value="ECO:0000315"/>
    <property type="project" value="MGI"/>
</dbReference>
<dbReference type="GO" id="GO:0048813">
    <property type="term" value="P:dendrite morphogenesis"/>
    <property type="evidence" value="ECO:0000316"/>
    <property type="project" value="MGI"/>
</dbReference>
<dbReference type="GO" id="GO:0001837">
    <property type="term" value="P:epithelial to mesenchymal transition"/>
    <property type="evidence" value="ECO:0000316"/>
    <property type="project" value="BHF-UCL"/>
</dbReference>
<dbReference type="GO" id="GO:0008625">
    <property type="term" value="P:extrinsic apoptotic signaling pathway via death domain receptors"/>
    <property type="evidence" value="ECO:0000316"/>
    <property type="project" value="MGI"/>
</dbReference>
<dbReference type="GO" id="GO:0061157">
    <property type="term" value="P:mRNA destabilization"/>
    <property type="evidence" value="ECO:0000315"/>
    <property type="project" value="ARUK-UCL"/>
</dbReference>
<dbReference type="GO" id="GO:0010629">
    <property type="term" value="P:negative regulation of gene expression"/>
    <property type="evidence" value="ECO:0000315"/>
    <property type="project" value="ARUK-UCL"/>
</dbReference>
<dbReference type="GO" id="GO:0045019">
    <property type="term" value="P:negative regulation of nitric oxide biosynthetic process"/>
    <property type="evidence" value="ECO:0000315"/>
    <property type="project" value="ARUK-UCL"/>
</dbReference>
<dbReference type="GO" id="GO:0001843">
    <property type="term" value="P:neural tube closure"/>
    <property type="evidence" value="ECO:0000316"/>
    <property type="project" value="MGI"/>
</dbReference>
<dbReference type="GO" id="GO:0018107">
    <property type="term" value="P:peptidyl-threonine phosphorylation"/>
    <property type="evidence" value="ECO:0000315"/>
    <property type="project" value="ARUK-UCL"/>
</dbReference>
<dbReference type="GO" id="GO:1902993">
    <property type="term" value="P:positive regulation of amyloid precursor protein catabolic process"/>
    <property type="evidence" value="ECO:0000315"/>
    <property type="project" value="ARUK-UCL"/>
</dbReference>
<dbReference type="GO" id="GO:1902004">
    <property type="term" value="P:positive regulation of amyloid-beta formation"/>
    <property type="evidence" value="ECO:0000315"/>
    <property type="project" value="ARUK-UCL"/>
</dbReference>
<dbReference type="GO" id="GO:0010613">
    <property type="term" value="P:positive regulation of cardiac muscle hypertrophy"/>
    <property type="evidence" value="ECO:0000315"/>
    <property type="project" value="ARUK-UCL"/>
</dbReference>
<dbReference type="GO" id="GO:0010825">
    <property type="term" value="P:positive regulation of centrosome duplication"/>
    <property type="evidence" value="ECO:0000315"/>
    <property type="project" value="MGI"/>
</dbReference>
<dbReference type="GO" id="GO:1905205">
    <property type="term" value="P:positive regulation of connective tissue replacement"/>
    <property type="evidence" value="ECO:0000315"/>
    <property type="project" value="ARUK-UCL"/>
</dbReference>
<dbReference type="GO" id="GO:0010628">
    <property type="term" value="P:positive regulation of gene expression"/>
    <property type="evidence" value="ECO:0000315"/>
    <property type="project" value="ARUK-UCL"/>
</dbReference>
<dbReference type="GO" id="GO:0043410">
    <property type="term" value="P:positive regulation of MAPK cascade"/>
    <property type="evidence" value="ECO:0000315"/>
    <property type="project" value="ARUK-UCL"/>
</dbReference>
<dbReference type="GO" id="GO:0098974">
    <property type="term" value="P:postsynaptic actin cytoskeleton organization"/>
    <property type="evidence" value="ECO:0000314"/>
    <property type="project" value="SynGO"/>
</dbReference>
<dbReference type="GO" id="GO:0032956">
    <property type="term" value="P:regulation of actin cytoskeleton organization"/>
    <property type="evidence" value="ECO:0007669"/>
    <property type="project" value="InterPro"/>
</dbReference>
<dbReference type="GO" id="GO:0110061">
    <property type="term" value="P:regulation of angiotensin-activated signaling pathway"/>
    <property type="evidence" value="ECO:0000315"/>
    <property type="project" value="ARUK-UCL"/>
</dbReference>
<dbReference type="GO" id="GO:1900037">
    <property type="term" value="P:regulation of cellular response to hypoxia"/>
    <property type="evidence" value="ECO:0000315"/>
    <property type="project" value="ARUK-UCL"/>
</dbReference>
<dbReference type="GO" id="GO:0042752">
    <property type="term" value="P:regulation of circadian rhythm"/>
    <property type="evidence" value="ECO:0000315"/>
    <property type="project" value="UniProtKB"/>
</dbReference>
<dbReference type="GO" id="GO:0031644">
    <property type="term" value="P:regulation of nervous system process"/>
    <property type="evidence" value="ECO:0000315"/>
    <property type="project" value="ARUK-UCL"/>
</dbReference>
<dbReference type="GO" id="GO:0090128">
    <property type="term" value="P:regulation of synapse maturation"/>
    <property type="evidence" value="ECO:0000314"/>
    <property type="project" value="SynGO"/>
</dbReference>
<dbReference type="GO" id="GO:1990776">
    <property type="term" value="P:response to angiotensin"/>
    <property type="evidence" value="ECO:0000316"/>
    <property type="project" value="ARUK-UCL"/>
</dbReference>
<dbReference type="GO" id="GO:0002931">
    <property type="term" value="P:response to ischemia"/>
    <property type="evidence" value="ECO:0000315"/>
    <property type="project" value="ARUK-UCL"/>
</dbReference>
<dbReference type="GO" id="GO:0071559">
    <property type="term" value="P:response to transforming growth factor beta"/>
    <property type="evidence" value="ECO:0000316"/>
    <property type="project" value="ARUK-UCL"/>
</dbReference>
<dbReference type="GO" id="GO:0007266">
    <property type="term" value="P:Rho protein signal transduction"/>
    <property type="evidence" value="ECO:0000266"/>
    <property type="project" value="MGI"/>
</dbReference>
<dbReference type="GO" id="GO:0048511">
    <property type="term" value="P:rhythmic process"/>
    <property type="evidence" value="ECO:0007669"/>
    <property type="project" value="UniProtKB-KW"/>
</dbReference>
<dbReference type="GO" id="GO:0006939">
    <property type="term" value="P:smooth muscle contraction"/>
    <property type="evidence" value="ECO:0007669"/>
    <property type="project" value="InterPro"/>
</dbReference>
<dbReference type="CDD" id="cd20875">
    <property type="entry name" value="C1_ROCK2"/>
    <property type="match status" value="1"/>
</dbReference>
<dbReference type="CDD" id="cd11638">
    <property type="entry name" value="HR1_ROCK2"/>
    <property type="match status" value="1"/>
</dbReference>
<dbReference type="CDD" id="cd01242">
    <property type="entry name" value="PH_ROCK"/>
    <property type="match status" value="1"/>
</dbReference>
<dbReference type="CDD" id="cd22250">
    <property type="entry name" value="ROCK_SBD"/>
    <property type="match status" value="1"/>
</dbReference>
<dbReference type="CDD" id="cd05621">
    <property type="entry name" value="STKc_ROCK2"/>
    <property type="match status" value="1"/>
</dbReference>
<dbReference type="FunFam" id="1.10.510.10:FF:000047">
    <property type="entry name" value="Rho-associated protein kinase 1"/>
    <property type="match status" value="1"/>
</dbReference>
<dbReference type="FunFam" id="3.30.60.20:FF:000036">
    <property type="entry name" value="Rho-associated protein kinase 1"/>
    <property type="match status" value="1"/>
</dbReference>
<dbReference type="FunFam" id="1.20.5.340:FF:000016">
    <property type="entry name" value="Rho-associated protein kinase 2"/>
    <property type="match status" value="1"/>
</dbReference>
<dbReference type="FunFam" id="2.30.29.30:FF:000033">
    <property type="entry name" value="Rho-associated protein kinase 2"/>
    <property type="match status" value="1"/>
</dbReference>
<dbReference type="FunFam" id="3.30.200.20:FF:000072">
    <property type="entry name" value="Rho-associated protein kinase 2"/>
    <property type="match status" value="1"/>
</dbReference>
<dbReference type="FunFam" id="1.20.5.730:FF:000001">
    <property type="entry name" value="rho-associated protein kinase 2"/>
    <property type="match status" value="1"/>
</dbReference>
<dbReference type="FunFam" id="3.30.200.20:FF:001759">
    <property type="entry name" value="Rho-associated, coiled-coil-containing protein kinase 2b"/>
    <property type="match status" value="1"/>
</dbReference>
<dbReference type="Gene3D" id="1.20.5.340">
    <property type="match status" value="1"/>
</dbReference>
<dbReference type="Gene3D" id="3.30.60.20">
    <property type="match status" value="1"/>
</dbReference>
<dbReference type="Gene3D" id="3.30.200.20">
    <property type="entry name" value="Phosphorylase Kinase, domain 1"/>
    <property type="match status" value="1"/>
</dbReference>
<dbReference type="Gene3D" id="2.30.29.30">
    <property type="entry name" value="Pleckstrin-homology domain (PH domain)/Phosphotyrosine-binding domain (PTB)"/>
    <property type="match status" value="1"/>
</dbReference>
<dbReference type="Gene3D" id="1.20.5.730">
    <property type="entry name" value="Single helix bin"/>
    <property type="match status" value="1"/>
</dbReference>
<dbReference type="Gene3D" id="1.10.510.10">
    <property type="entry name" value="Transferase(Phosphotransferase) domain 1"/>
    <property type="match status" value="1"/>
</dbReference>
<dbReference type="InterPro" id="IPR000961">
    <property type="entry name" value="AGC-kinase_C"/>
</dbReference>
<dbReference type="InterPro" id="IPR046349">
    <property type="entry name" value="C1-like_sf"/>
</dbReference>
<dbReference type="InterPro" id="IPR011072">
    <property type="entry name" value="HR1_rho-bd"/>
</dbReference>
<dbReference type="InterPro" id="IPR011009">
    <property type="entry name" value="Kinase-like_dom_sf"/>
</dbReference>
<dbReference type="InterPro" id="IPR002219">
    <property type="entry name" value="PE/DAG-bd"/>
</dbReference>
<dbReference type="InterPro" id="IPR011993">
    <property type="entry name" value="PH-like_dom_sf"/>
</dbReference>
<dbReference type="InterPro" id="IPR001849">
    <property type="entry name" value="PH_domain"/>
</dbReference>
<dbReference type="InterPro" id="IPR000719">
    <property type="entry name" value="Prot_kinase_dom"/>
</dbReference>
<dbReference type="InterPro" id="IPR017441">
    <property type="entry name" value="Protein_kinase_ATP_BS"/>
</dbReference>
<dbReference type="InterPro" id="IPR050839">
    <property type="entry name" value="Rho-assoc_Ser/Thr_Kinase"/>
</dbReference>
<dbReference type="InterPro" id="IPR020684">
    <property type="entry name" value="ROCK1/ROCK2"/>
</dbReference>
<dbReference type="InterPro" id="IPR029878">
    <property type="entry name" value="ROCK2_cat"/>
</dbReference>
<dbReference type="InterPro" id="IPR037311">
    <property type="entry name" value="ROCK2_HR1"/>
</dbReference>
<dbReference type="InterPro" id="IPR015008">
    <property type="entry name" value="ROCK_Rho-bd_dom"/>
</dbReference>
<dbReference type="InterPro" id="IPR008271">
    <property type="entry name" value="Ser/Thr_kinase_AS"/>
</dbReference>
<dbReference type="PANTHER" id="PTHR22988">
    <property type="entry name" value="MYOTONIC DYSTROPHY S/T KINASE-RELATED"/>
    <property type="match status" value="1"/>
</dbReference>
<dbReference type="PANTHER" id="PTHR22988:SF28">
    <property type="entry name" value="RHO-ASSOCIATED PROTEIN KINASE 2"/>
    <property type="match status" value="1"/>
</dbReference>
<dbReference type="Pfam" id="PF25346">
    <property type="entry name" value="PH_MRCK"/>
    <property type="match status" value="1"/>
</dbReference>
<dbReference type="Pfam" id="PF00069">
    <property type="entry name" value="Pkinase"/>
    <property type="match status" value="1"/>
</dbReference>
<dbReference type="Pfam" id="PF08912">
    <property type="entry name" value="Rho_Binding"/>
    <property type="match status" value="1"/>
</dbReference>
<dbReference type="PIRSF" id="PIRSF037568">
    <property type="entry name" value="Rho_kinase"/>
    <property type="match status" value="1"/>
</dbReference>
<dbReference type="SMART" id="SM00109">
    <property type="entry name" value="C1"/>
    <property type="match status" value="1"/>
</dbReference>
<dbReference type="SMART" id="SM00233">
    <property type="entry name" value="PH"/>
    <property type="match status" value="1"/>
</dbReference>
<dbReference type="SMART" id="SM00133">
    <property type="entry name" value="S_TK_X"/>
    <property type="match status" value="1"/>
</dbReference>
<dbReference type="SMART" id="SM00220">
    <property type="entry name" value="S_TKc"/>
    <property type="match status" value="1"/>
</dbReference>
<dbReference type="SUPFAM" id="SSF57889">
    <property type="entry name" value="Cysteine-rich domain"/>
    <property type="match status" value="1"/>
</dbReference>
<dbReference type="SUPFAM" id="SSF103652">
    <property type="entry name" value="G protein-binding domain"/>
    <property type="match status" value="1"/>
</dbReference>
<dbReference type="SUPFAM" id="SSF50729">
    <property type="entry name" value="PH domain-like"/>
    <property type="match status" value="1"/>
</dbReference>
<dbReference type="SUPFAM" id="SSF56112">
    <property type="entry name" value="Protein kinase-like (PK-like)"/>
    <property type="match status" value="1"/>
</dbReference>
<dbReference type="PROSITE" id="PS51285">
    <property type="entry name" value="AGC_KINASE_CTER"/>
    <property type="match status" value="1"/>
</dbReference>
<dbReference type="PROSITE" id="PS50003">
    <property type="entry name" value="PH_DOMAIN"/>
    <property type="match status" value="1"/>
</dbReference>
<dbReference type="PROSITE" id="PS00107">
    <property type="entry name" value="PROTEIN_KINASE_ATP"/>
    <property type="match status" value="1"/>
</dbReference>
<dbReference type="PROSITE" id="PS50011">
    <property type="entry name" value="PROTEIN_KINASE_DOM"/>
    <property type="match status" value="1"/>
</dbReference>
<dbReference type="PROSITE" id="PS00108">
    <property type="entry name" value="PROTEIN_KINASE_ST"/>
    <property type="match status" value="1"/>
</dbReference>
<dbReference type="PROSITE" id="PS51860">
    <property type="entry name" value="REM_1"/>
    <property type="match status" value="1"/>
</dbReference>
<dbReference type="PROSITE" id="PS51859">
    <property type="entry name" value="RHO_BD"/>
    <property type="match status" value="1"/>
</dbReference>
<dbReference type="PROSITE" id="PS50081">
    <property type="entry name" value="ZF_DAG_PE_2"/>
    <property type="match status" value="1"/>
</dbReference>
<proteinExistence type="evidence at protein level"/>
<reference key="1">
    <citation type="journal article" date="1996" name="FEBS Lett.">
        <title>ROCK-I and ROCK-II, two isoforms of Rho-associated coiled-coil forming protein serine/threonine kinase in mice.</title>
        <authorList>
            <person name="Nakagawa O."/>
            <person name="Fujisawa K."/>
            <person name="Ishizaki T."/>
            <person name="Saito Y."/>
            <person name="Nakao K."/>
            <person name="Narumiya S."/>
        </authorList>
    </citation>
    <scope>NUCLEOTIDE SEQUENCE [MRNA] (ISOFORM 1)</scope>
    <scope>TISSUE SPECIFICITY</scope>
</reference>
<reference key="2">
    <citation type="journal article" date="2007" name="Mol. Cell. Biol.">
        <title>ROCK2 and its alternatively spliced isoform ROCK2m positively control the maturation of the myogenic program.</title>
        <authorList>
            <person name="Pelosi M."/>
            <person name="Marampon F."/>
            <person name="Zani B.M."/>
            <person name="Prudente S."/>
            <person name="Perlas E."/>
            <person name="Caputo V."/>
            <person name="Cianetti L."/>
            <person name="Berno V."/>
            <person name="Narumiya S."/>
            <person name="Kang S.W."/>
            <person name="Musaro A."/>
            <person name="Rosenthal N."/>
        </authorList>
    </citation>
    <scope>NUCLEOTIDE SEQUENCE [MRNA] OF 1-1144 (ISOFORM 2)</scope>
    <scope>PHOSPHORYLATION</scope>
    <scope>SUBCELLULAR LOCATION</scope>
    <scope>TISSUE SPECIFICITY</scope>
    <source>
        <strain>C57BL/6J</strain>
    </source>
</reference>
<reference key="3">
    <citation type="journal article" date="2005" name="Science">
        <title>The transcriptional landscape of the mammalian genome.</title>
        <authorList>
            <person name="Carninci P."/>
            <person name="Kasukawa T."/>
            <person name="Katayama S."/>
            <person name="Gough J."/>
            <person name="Frith M.C."/>
            <person name="Maeda N."/>
            <person name="Oyama R."/>
            <person name="Ravasi T."/>
            <person name="Lenhard B."/>
            <person name="Wells C."/>
            <person name="Kodzius R."/>
            <person name="Shimokawa K."/>
            <person name="Bajic V.B."/>
            <person name="Brenner S.E."/>
            <person name="Batalov S."/>
            <person name="Forrest A.R."/>
            <person name="Zavolan M."/>
            <person name="Davis M.J."/>
            <person name="Wilming L.G."/>
            <person name="Aidinis V."/>
            <person name="Allen J.E."/>
            <person name="Ambesi-Impiombato A."/>
            <person name="Apweiler R."/>
            <person name="Aturaliya R.N."/>
            <person name="Bailey T.L."/>
            <person name="Bansal M."/>
            <person name="Baxter L."/>
            <person name="Beisel K.W."/>
            <person name="Bersano T."/>
            <person name="Bono H."/>
            <person name="Chalk A.M."/>
            <person name="Chiu K.P."/>
            <person name="Choudhary V."/>
            <person name="Christoffels A."/>
            <person name="Clutterbuck D.R."/>
            <person name="Crowe M.L."/>
            <person name="Dalla E."/>
            <person name="Dalrymple B.P."/>
            <person name="de Bono B."/>
            <person name="Della Gatta G."/>
            <person name="di Bernardo D."/>
            <person name="Down T."/>
            <person name="Engstrom P."/>
            <person name="Fagiolini M."/>
            <person name="Faulkner G."/>
            <person name="Fletcher C.F."/>
            <person name="Fukushima T."/>
            <person name="Furuno M."/>
            <person name="Futaki S."/>
            <person name="Gariboldi M."/>
            <person name="Georgii-Hemming P."/>
            <person name="Gingeras T.R."/>
            <person name="Gojobori T."/>
            <person name="Green R.E."/>
            <person name="Gustincich S."/>
            <person name="Harbers M."/>
            <person name="Hayashi Y."/>
            <person name="Hensch T.K."/>
            <person name="Hirokawa N."/>
            <person name="Hill D."/>
            <person name="Huminiecki L."/>
            <person name="Iacono M."/>
            <person name="Ikeo K."/>
            <person name="Iwama A."/>
            <person name="Ishikawa T."/>
            <person name="Jakt M."/>
            <person name="Kanapin A."/>
            <person name="Katoh M."/>
            <person name="Kawasawa Y."/>
            <person name="Kelso J."/>
            <person name="Kitamura H."/>
            <person name="Kitano H."/>
            <person name="Kollias G."/>
            <person name="Krishnan S.P."/>
            <person name="Kruger A."/>
            <person name="Kummerfeld S.K."/>
            <person name="Kurochkin I.V."/>
            <person name="Lareau L.F."/>
            <person name="Lazarevic D."/>
            <person name="Lipovich L."/>
            <person name="Liu J."/>
            <person name="Liuni S."/>
            <person name="McWilliam S."/>
            <person name="Madan Babu M."/>
            <person name="Madera M."/>
            <person name="Marchionni L."/>
            <person name="Matsuda H."/>
            <person name="Matsuzawa S."/>
            <person name="Miki H."/>
            <person name="Mignone F."/>
            <person name="Miyake S."/>
            <person name="Morris K."/>
            <person name="Mottagui-Tabar S."/>
            <person name="Mulder N."/>
            <person name="Nakano N."/>
            <person name="Nakauchi H."/>
            <person name="Ng P."/>
            <person name="Nilsson R."/>
            <person name="Nishiguchi S."/>
            <person name="Nishikawa S."/>
            <person name="Nori F."/>
            <person name="Ohara O."/>
            <person name="Okazaki Y."/>
            <person name="Orlando V."/>
            <person name="Pang K.C."/>
            <person name="Pavan W.J."/>
            <person name="Pavesi G."/>
            <person name="Pesole G."/>
            <person name="Petrovsky N."/>
            <person name="Piazza S."/>
            <person name="Reed J."/>
            <person name="Reid J.F."/>
            <person name="Ring B.Z."/>
            <person name="Ringwald M."/>
            <person name="Rost B."/>
            <person name="Ruan Y."/>
            <person name="Salzberg S.L."/>
            <person name="Sandelin A."/>
            <person name="Schneider C."/>
            <person name="Schoenbach C."/>
            <person name="Sekiguchi K."/>
            <person name="Semple C.A."/>
            <person name="Seno S."/>
            <person name="Sessa L."/>
            <person name="Sheng Y."/>
            <person name="Shibata Y."/>
            <person name="Shimada H."/>
            <person name="Shimada K."/>
            <person name="Silva D."/>
            <person name="Sinclair B."/>
            <person name="Sperling S."/>
            <person name="Stupka E."/>
            <person name="Sugiura K."/>
            <person name="Sultana R."/>
            <person name="Takenaka Y."/>
            <person name="Taki K."/>
            <person name="Tammoja K."/>
            <person name="Tan S.L."/>
            <person name="Tang S."/>
            <person name="Taylor M.S."/>
            <person name="Tegner J."/>
            <person name="Teichmann S.A."/>
            <person name="Ueda H.R."/>
            <person name="van Nimwegen E."/>
            <person name="Verardo R."/>
            <person name="Wei C.L."/>
            <person name="Yagi K."/>
            <person name="Yamanishi H."/>
            <person name="Zabarovsky E."/>
            <person name="Zhu S."/>
            <person name="Zimmer A."/>
            <person name="Hide W."/>
            <person name="Bult C."/>
            <person name="Grimmond S.M."/>
            <person name="Teasdale R.D."/>
            <person name="Liu E.T."/>
            <person name="Brusic V."/>
            <person name="Quackenbush J."/>
            <person name="Wahlestedt C."/>
            <person name="Mattick J.S."/>
            <person name="Hume D.A."/>
            <person name="Kai C."/>
            <person name="Sasaki D."/>
            <person name="Tomaru Y."/>
            <person name="Fukuda S."/>
            <person name="Kanamori-Katayama M."/>
            <person name="Suzuki M."/>
            <person name="Aoki J."/>
            <person name="Arakawa T."/>
            <person name="Iida J."/>
            <person name="Imamura K."/>
            <person name="Itoh M."/>
            <person name="Kato T."/>
            <person name="Kawaji H."/>
            <person name="Kawagashira N."/>
            <person name="Kawashima T."/>
            <person name="Kojima M."/>
            <person name="Kondo S."/>
            <person name="Konno H."/>
            <person name="Nakano K."/>
            <person name="Ninomiya N."/>
            <person name="Nishio T."/>
            <person name="Okada M."/>
            <person name="Plessy C."/>
            <person name="Shibata K."/>
            <person name="Shiraki T."/>
            <person name="Suzuki S."/>
            <person name="Tagami M."/>
            <person name="Waki K."/>
            <person name="Watahiki A."/>
            <person name="Okamura-Oho Y."/>
            <person name="Suzuki H."/>
            <person name="Kawai J."/>
            <person name="Hayashizaki Y."/>
        </authorList>
    </citation>
    <scope>NUCLEOTIDE SEQUENCE [LARGE SCALE MRNA] OF 633-1388 AND 677-1388</scope>
    <source>
        <strain>C57BL/6J</strain>
        <tissue>Brain</tissue>
        <tissue>Urinary bladder</tissue>
    </source>
</reference>
<reference key="4">
    <citation type="journal article" date="2003" name="Mol. Cell. Biol.">
        <title>Targeted disruption of the mouse rho-associated kinase 2 gene results in intrauterine growth retardation and fetal death.</title>
        <authorList>
            <person name="Thumkeo D."/>
            <person name="Keel J."/>
            <person name="Ishizaki T."/>
            <person name="Hirose M."/>
            <person name="Nonomura K."/>
            <person name="Oshima H."/>
            <person name="Oshima M."/>
            <person name="Taketo M.M."/>
            <person name="Narumiya S."/>
        </authorList>
    </citation>
    <scope>FUNCTION</scope>
    <scope>DISRUPTION PHENOTYPE</scope>
</reference>
<reference key="5">
    <citation type="journal article" date="2005" name="J. Cell Biol.">
        <title>ROCK-I regulates closure of the eyelids and ventral body wall by inducing assembly of actomyosin bundles.</title>
        <authorList>
            <person name="Shimizu Y."/>
            <person name="Thumkeo D."/>
            <person name="Keel J."/>
            <person name="Ishizaki T."/>
            <person name="Oshima H."/>
            <person name="Oshima M."/>
            <person name="Noda Y."/>
            <person name="Matsumura F."/>
            <person name="Taketo M.M."/>
            <person name="Narumiya S."/>
        </authorList>
    </citation>
    <scope>DISRUPTION PHENOTYPE</scope>
</reference>
<reference key="6">
    <citation type="journal article" date="2005" name="J. Exp. Med.">
        <title>Direct cleavage of ROCK II by granzyme B induces target cell membrane blebbing in a caspase-independent manner.</title>
        <authorList>
            <person name="Sebbagh M."/>
            <person name="Hamelin J."/>
            <person name="Bertoglio J."/>
            <person name="Solary E."/>
            <person name="Breard J."/>
        </authorList>
    </citation>
    <scope>CLEAVAGE BY GRANZYME B</scope>
</reference>
<reference key="7">
    <citation type="journal article" date="2009" name="Am. J. Physiol.">
        <title>Inhibition of Rho-dependent kinases ROCK I/II activates VEGF-driven retinal neovascularization and sprouting angiogenesis.</title>
        <authorList>
            <person name="Kroll J."/>
            <person name="Epting D."/>
            <person name="Kern K."/>
            <person name="Dietz C.T."/>
            <person name="Feng Y."/>
            <person name="Hammes H.P."/>
            <person name="Wieland T."/>
            <person name="Augustin H.G."/>
        </authorList>
    </citation>
    <scope>FUNCTION</scope>
</reference>
<reference key="8">
    <citation type="journal article" date="2009" name="Neuropharmacology">
        <title>A critical role of Rho-kinase ROCK2 in the regulation of spine and synaptic function.</title>
        <authorList>
            <person name="Zhou Z."/>
            <person name="Meng Y."/>
            <person name="Asrar S."/>
            <person name="Todorovski Z."/>
            <person name="Jia Z."/>
        </authorList>
    </citation>
    <scope>FUNCTION</scope>
    <scope>DISRUPTION PHENOTYPE</scope>
</reference>
<reference key="9">
    <citation type="journal article" date="2010" name="Cell">
        <title>A tissue-specific atlas of mouse protein phosphorylation and expression.</title>
        <authorList>
            <person name="Huttlin E.L."/>
            <person name="Jedrychowski M.P."/>
            <person name="Elias J.E."/>
            <person name="Goswami T."/>
            <person name="Rad R."/>
            <person name="Beausoleil S.A."/>
            <person name="Villen J."/>
            <person name="Haas W."/>
            <person name="Sowa M.E."/>
            <person name="Gygi S.P."/>
        </authorList>
    </citation>
    <scope>PHOSPHORYLATION [LARGE SCALE ANALYSIS] AT SER-1137 AND SER-1374</scope>
    <scope>IDENTIFICATION BY MASS SPECTROMETRY [LARGE SCALE ANALYSIS]</scope>
    <source>
        <tissue>Brain</tissue>
        <tissue>Brown adipose tissue</tissue>
        <tissue>Heart</tissue>
        <tissue>Kidney</tissue>
        <tissue>Liver</tissue>
        <tissue>Lung</tissue>
        <tissue>Pancreas</tissue>
        <tissue>Spleen</tissue>
        <tissue>Testis</tissue>
    </source>
</reference>
<reference key="10">
    <citation type="journal article" date="2010" name="J. Clin. Invest.">
        <title>Phosphorylation of IRF4 by ROCK2 regulates IL-17 and IL-21 production and the development of autoimmunity in mice.</title>
        <authorList>
            <person name="Biswas P.S."/>
            <person name="Gupta S."/>
            <person name="Chang E."/>
            <person name="Song L."/>
            <person name="Stirzaker R.A."/>
            <person name="Liao J.K."/>
            <person name="Bhagat G."/>
            <person name="Pernis A.B."/>
        </authorList>
    </citation>
    <scope>FUNCTION</scope>
</reference>
<reference key="11">
    <citation type="journal article" date="2013" name="Circulation">
        <title>Pivotal role of Rho-associated kinase 2 in generating the intrinsic circadian rhythm of vascular contractility.</title>
        <authorList>
            <person name="Saito T."/>
            <person name="Hirano M."/>
            <person name="Ide T."/>
            <person name="Ichiki T."/>
            <person name="Koibuchi N."/>
            <person name="Sunagawa K."/>
            <person name="Hirano K."/>
        </authorList>
    </citation>
    <scope>FUNCTION</scope>
    <scope>INDUCTION</scope>
</reference>
<reference key="12">
    <citation type="journal article" date="2017" name="Neuroscience">
        <title>Conditional deletion of pejvakin in adult outer hair cells causes progressive hearing loss in mice.</title>
        <authorList>
            <person name="Harris S.L."/>
            <person name="Kazmierczak M."/>
            <person name="Pangrsic T."/>
            <person name="Shah P."/>
            <person name="Chuchvara N."/>
            <person name="Barrantes-Freer A."/>
            <person name="Moser T."/>
            <person name="Schwander M."/>
        </authorList>
    </citation>
    <scope>INTERACTION WITH PJVK</scope>
</reference>
<evidence type="ECO:0000250" key="1"/>
<evidence type="ECO:0000250" key="2">
    <source>
        <dbReference type="UniProtKB" id="O75116"/>
    </source>
</evidence>
<evidence type="ECO:0000250" key="3">
    <source>
        <dbReference type="UniProtKB" id="Q28021"/>
    </source>
</evidence>
<evidence type="ECO:0000250" key="4">
    <source>
        <dbReference type="UniProtKB" id="Q62868"/>
    </source>
</evidence>
<evidence type="ECO:0000255" key="5"/>
<evidence type="ECO:0000255" key="6">
    <source>
        <dbReference type="PROSITE-ProRule" id="PRU00145"/>
    </source>
</evidence>
<evidence type="ECO:0000255" key="7">
    <source>
        <dbReference type="PROSITE-ProRule" id="PRU00159"/>
    </source>
</evidence>
<evidence type="ECO:0000255" key="8">
    <source>
        <dbReference type="PROSITE-ProRule" id="PRU00226"/>
    </source>
</evidence>
<evidence type="ECO:0000255" key="9">
    <source>
        <dbReference type="PROSITE-ProRule" id="PRU00618"/>
    </source>
</evidence>
<evidence type="ECO:0000255" key="10">
    <source>
        <dbReference type="PROSITE-ProRule" id="PRU01206"/>
    </source>
</evidence>
<evidence type="ECO:0000255" key="11">
    <source>
        <dbReference type="PROSITE-ProRule" id="PRU01207"/>
    </source>
</evidence>
<evidence type="ECO:0000255" key="12">
    <source>
        <dbReference type="PROSITE-ProRule" id="PRU10027"/>
    </source>
</evidence>
<evidence type="ECO:0000256" key="13">
    <source>
        <dbReference type="SAM" id="MobiDB-lite"/>
    </source>
</evidence>
<evidence type="ECO:0000269" key="14">
    <source>
    </source>
</evidence>
<evidence type="ECO:0000269" key="15">
    <source>
    </source>
</evidence>
<evidence type="ECO:0000269" key="16">
    <source>
    </source>
</evidence>
<evidence type="ECO:0000269" key="17">
    <source>
    </source>
</evidence>
<evidence type="ECO:0000269" key="18">
    <source>
    </source>
</evidence>
<evidence type="ECO:0000269" key="19">
    <source>
    </source>
</evidence>
<evidence type="ECO:0000269" key="20">
    <source>
    </source>
</evidence>
<evidence type="ECO:0000269" key="21">
    <source>
    </source>
</evidence>
<evidence type="ECO:0000269" key="22">
    <source>
    </source>
</evidence>
<evidence type="ECO:0000303" key="23">
    <source>
    </source>
</evidence>
<evidence type="ECO:0000305" key="24"/>
<evidence type="ECO:0007744" key="25">
    <source>
    </source>
</evidence>
<comment type="function">
    <text evidence="14 17 18 19 20">Protein kinase which is a key regulator of actin cytoskeleton and cell polarity. Involved in regulation of smooth muscle contraction, actin cytoskeleton organization, stress fiber and focal adhesion formation, neurite retraction, cell adhesion and motility via phosphorylation of ADD1, BRCA2, CNN1, EZR, DPYSL2, EP300, MSN, MYL9/MLC2, NPM1, RDX, PPP1R12A and VIM. Phosphorylates SORL1 and IRF4. Acts as a negative regulator of VEGF-induced angiogenic endothelial cell activation. Positively regulates the activation of p42/MAPK1-p44/MAPK3 and of p90RSK/RPS6KA1 during myogenic differentiation. Plays an important role in the timely initiation of centrosome duplication. Inhibits keratinocyte terminal differentiation. May regulate closure of the eyelids and ventral body wall through organization of actomyosin bundles. Plays a critical role in the regulation of spine and synaptic properties in the hippocampus. Plays a role in placental homeostasis during the perinatal period. Plays an important role in generating the circadian rhythm of the aortic myofilament Ca(2+) sensitivity and vascular contractility by modulating the myosin light chain phosphorylation.</text>
</comment>
<comment type="catalytic activity">
    <reaction>
        <text>L-seryl-[protein] + ATP = O-phospho-L-seryl-[protein] + ADP + H(+)</text>
        <dbReference type="Rhea" id="RHEA:17989"/>
        <dbReference type="Rhea" id="RHEA-COMP:9863"/>
        <dbReference type="Rhea" id="RHEA-COMP:11604"/>
        <dbReference type="ChEBI" id="CHEBI:15378"/>
        <dbReference type="ChEBI" id="CHEBI:29999"/>
        <dbReference type="ChEBI" id="CHEBI:30616"/>
        <dbReference type="ChEBI" id="CHEBI:83421"/>
        <dbReference type="ChEBI" id="CHEBI:456216"/>
        <dbReference type="EC" id="2.7.11.1"/>
    </reaction>
</comment>
<comment type="catalytic activity">
    <reaction>
        <text>L-threonyl-[protein] + ATP = O-phospho-L-threonyl-[protein] + ADP + H(+)</text>
        <dbReference type="Rhea" id="RHEA:46608"/>
        <dbReference type="Rhea" id="RHEA-COMP:11060"/>
        <dbReference type="Rhea" id="RHEA-COMP:11605"/>
        <dbReference type="ChEBI" id="CHEBI:15378"/>
        <dbReference type="ChEBI" id="CHEBI:30013"/>
        <dbReference type="ChEBI" id="CHEBI:30616"/>
        <dbReference type="ChEBI" id="CHEBI:61977"/>
        <dbReference type="ChEBI" id="CHEBI:456216"/>
        <dbReference type="EC" id="2.7.11.1"/>
    </reaction>
</comment>
<comment type="cofactor">
    <cofactor evidence="1">
        <name>Mg(2+)</name>
        <dbReference type="ChEBI" id="CHEBI:18420"/>
    </cofactor>
</comment>
<comment type="activity regulation">
    <text evidence="1">Activated by RHOA binding. Inhibited by Y-27632 (By similarity).</text>
</comment>
<comment type="subunit">
    <text evidence="2 3 4 21">Homodimer (By similarity). Interacts with IRS1. Interacts with RAF1 (By similarity). Interacts with RHOA (activated by GTP), RHOB and RHOC (By similarity). Interacts with PPP1R12A (By similarity). Interacts with EP300 (By similarity). Interacts with CHORDC1 (By similarity). Interacts with BRCA2 (By similarity). Interacts with NPM1; this interaction enhances ROCK2 activity (By similarity). Interacts with SORL1 (By similarity). Interacts with PJVK (PubMed:28089576).</text>
</comment>
<comment type="subcellular location">
    <molecule>Isoform 1</molecule>
    <subcellularLocation>
        <location>Cytoplasm</location>
    </subcellularLocation>
    <subcellularLocation>
        <location>Cell membrane</location>
        <topology>Peripheral membrane protein</topology>
    </subcellularLocation>
    <subcellularLocation>
        <location evidence="1">Nucleus</location>
    </subcellularLocation>
    <subcellularLocation>
        <location evidence="1">Cytoplasm</location>
        <location evidence="1">Cytoskeleton</location>
        <location evidence="1">Microtubule organizing center</location>
        <location evidence="1">Centrosome</location>
    </subcellularLocation>
    <text evidence="1">Cytoplasmic, and associated with actin microfilaments and the plasma membrane.</text>
</comment>
<comment type="subcellular location">
    <molecule>Isoform 2</molecule>
    <subcellularLocation>
        <location>Cytoplasm</location>
    </subcellularLocation>
    <subcellularLocation>
        <location>Cell membrane</location>
        <topology>Peripheral membrane protein</topology>
    </subcellularLocation>
</comment>
<comment type="alternative products">
    <event type="alternative splicing"/>
    <isoform>
        <id>P70336-1</id>
        <name>1</name>
        <sequence type="displayed"/>
    </isoform>
    <isoform>
        <id>P70336-2</id>
        <name>2</name>
        <name>ROCK2m</name>
        <sequence type="described" ref="VSP_041818 VSP_041819"/>
    </isoform>
</comment>
<comment type="tissue specificity">
    <text evidence="16 22">Highly expressed in brain, heart, lung, liver, stomach, spleen, kidney, testis, muscle, embryo and placenta. Isoform 2 is expressed predominantly in the skeletal muscle.</text>
</comment>
<comment type="induction">
    <text evidence="20">Expression oscillates in a circadian manner in the aorta.</text>
</comment>
<comment type="domain">
    <text evidence="1">An interaction between Thr-414 and Asp-48 is essential for kinase activity and dimerization.</text>
</comment>
<comment type="PTM">
    <text evidence="1">Autophosphorylated. Phosphorylation at Tyr-722 reduces its binding to RHOA and is crucial for focal adhesion dynamics. Dephosphorylation by PTPN11 stimulates its RHOA binding activity (By similarity).</text>
</comment>
<comment type="PTM">
    <text>Cleaved by granzyme B during apoptosis. This leads to constitutive activation of the kinase and membrane blebbing.</text>
</comment>
<comment type="disruption phenotype">
    <text evidence="14 15 17">Mice exhibit both EOB (eyes open at birth) and omphalocele phenotypes as a result of disorganization of actomyosin cables in the eyelid epithelium and defective actin assembly in the umbilical ring. Mice are impaired in both basal synaptic transmission and hippocampal long-term potentiation (LTP). Embryos manifest extensive thrombus formation in the placenta, resulting in placental dysfunction, intrauterine growth retardation, and fetal death.</text>
</comment>
<comment type="similarity">
    <text evidence="24">Belongs to the protein kinase superfamily. AGC Ser/Thr protein kinase family.</text>
</comment>